<comment type="function">
    <text evidence="2">Catalyzes the reversible conversion of aspartate and 2-oxoglutarate to glutamate and oxaloacetate. Can also transaminate prephenate in the presence of glutamate.</text>
</comment>
<comment type="catalytic activity">
    <reaction evidence="2">
        <text>L-aspartate + 2-oxoglutarate = oxaloacetate + L-glutamate</text>
        <dbReference type="Rhea" id="RHEA:21824"/>
        <dbReference type="ChEBI" id="CHEBI:16452"/>
        <dbReference type="ChEBI" id="CHEBI:16810"/>
        <dbReference type="ChEBI" id="CHEBI:29985"/>
        <dbReference type="ChEBI" id="CHEBI:29991"/>
        <dbReference type="EC" id="2.6.1.1"/>
    </reaction>
</comment>
<comment type="catalytic activity">
    <reaction evidence="2">
        <text>L-arogenate + 2-oxoglutarate = prephenate + L-glutamate</text>
        <dbReference type="Rhea" id="RHEA:22880"/>
        <dbReference type="ChEBI" id="CHEBI:16810"/>
        <dbReference type="ChEBI" id="CHEBI:29934"/>
        <dbReference type="ChEBI" id="CHEBI:29985"/>
        <dbReference type="ChEBI" id="CHEBI:58180"/>
        <dbReference type="EC" id="2.6.1.79"/>
    </reaction>
</comment>
<comment type="cofactor">
    <cofactor evidence="2">
        <name>pyridoxal 5'-phosphate</name>
        <dbReference type="ChEBI" id="CHEBI:597326"/>
    </cofactor>
</comment>
<comment type="subunit">
    <text evidence="2">Homodimer.</text>
</comment>
<comment type="subcellular location">
    <subcellularLocation>
        <location evidence="2">Cytoplasm</location>
    </subcellularLocation>
</comment>
<comment type="similarity">
    <text evidence="4">Belongs to the class-I pyridoxal-phosphate-dependent aminotransferase family.</text>
</comment>
<comment type="sequence caution" evidence="4">
    <conflict type="erroneous initiation">
        <sequence resource="EMBL-CDS" id="CAA14561"/>
    </conflict>
</comment>
<protein>
    <recommendedName>
        <fullName evidence="2">Probable aspartate/prephenate aminotransferase</fullName>
        <shortName evidence="2">AspAT / PAT</shortName>
        <ecNumber evidence="2">2.6.1.1</ecNumber>
        <ecNumber evidence="2">2.6.1.79</ecNumber>
    </recommendedName>
    <alternativeName>
        <fullName>Transaminase A</fullName>
    </alternativeName>
</protein>
<name>AAPAT_RICPR</name>
<organism>
    <name type="scientific">Rickettsia prowazekii (strain Madrid E)</name>
    <dbReference type="NCBI Taxonomy" id="272947"/>
    <lineage>
        <taxon>Bacteria</taxon>
        <taxon>Pseudomonadati</taxon>
        <taxon>Pseudomonadota</taxon>
        <taxon>Alphaproteobacteria</taxon>
        <taxon>Rickettsiales</taxon>
        <taxon>Rickettsiaceae</taxon>
        <taxon>Rickettsieae</taxon>
        <taxon>Rickettsia</taxon>
        <taxon>typhus group</taxon>
    </lineage>
</organism>
<keyword id="KW-0032">Aminotransferase</keyword>
<keyword id="KW-0963">Cytoplasm</keyword>
<keyword id="KW-0663">Pyridoxal phosphate</keyword>
<keyword id="KW-1185">Reference proteome</keyword>
<keyword id="KW-0808">Transferase</keyword>
<sequence length="399" mass="44282">MSIISTRLNSIKPSPTLAVVKKTLELKKAGVNIIALGAGEPDFDTPDNIKEVAITSIKDGFTKYTNVDGIPLLKQAIKNKFKRENNIDYELDEIIVSTGGKQVIYNLFMASLDKGDEVIIPVPYWVSYPDMVALSTGTPVFVNCGIENNFKLSVEALEHSITDKTKWLIINSPSNPTGAGYNCKELENIAKTLRKYPNVNIMSDDIYEHITFDDFKFYTLAQIAPDLKERIFTVNGVSKAYSMTGWRIGYGAGSKALIKAMTIIQSQSTSNPCSISQMAAIEALNGTQDYIKSNALNFQKKRDLALSILEEVTYFECYKPEGAFYLFVKCDKIFGTKTKSGRIIANSNNFSEYLLEEAKVAVVPGIAFGLDGYFRISYATSMQELEEACIRIKHACNAL</sequence>
<evidence type="ECO:0000250" key="1">
    <source>
        <dbReference type="UniProtKB" id="P00509"/>
    </source>
</evidence>
<evidence type="ECO:0000250" key="2">
    <source>
        <dbReference type="UniProtKB" id="Q02635"/>
    </source>
</evidence>
<evidence type="ECO:0000250" key="3">
    <source>
        <dbReference type="UniProtKB" id="Q56232"/>
    </source>
</evidence>
<evidence type="ECO:0000305" key="4"/>
<proteinExistence type="inferred from homology"/>
<reference key="1">
    <citation type="journal article" date="1998" name="Nature">
        <title>The genome sequence of Rickettsia prowazekii and the origin of mitochondria.</title>
        <authorList>
            <person name="Andersson S.G.E."/>
            <person name="Zomorodipour A."/>
            <person name="Andersson J.O."/>
            <person name="Sicheritz-Ponten T."/>
            <person name="Alsmark U.C.M."/>
            <person name="Podowski R.M."/>
            <person name="Naeslund A.K."/>
            <person name="Eriksson A.-S."/>
            <person name="Winkler H.H."/>
            <person name="Kurland C.G."/>
        </authorList>
    </citation>
    <scope>NUCLEOTIDE SEQUENCE [LARGE SCALE GENOMIC DNA]</scope>
    <source>
        <strain>Madrid E</strain>
    </source>
</reference>
<accession>Q9ZE56</accession>
<gene>
    <name type="primary">aatA</name>
    <name type="synonym">aspC</name>
    <name type="ordered locus">RP091</name>
</gene>
<feature type="chain" id="PRO_0000123851" description="Probable aspartate/prephenate aminotransferase">
    <location>
        <begin position="1"/>
        <end position="399"/>
    </location>
</feature>
<feature type="binding site" evidence="1">
    <location>
        <position position="39"/>
    </location>
    <ligand>
        <name>L-aspartate</name>
        <dbReference type="ChEBI" id="CHEBI:29991"/>
    </ligand>
</feature>
<feature type="binding site" evidence="3">
    <location>
        <position position="125"/>
    </location>
    <ligand>
        <name>L-aspartate</name>
        <dbReference type="ChEBI" id="CHEBI:29991"/>
    </ligand>
</feature>
<feature type="binding site" evidence="3">
    <location>
        <position position="175"/>
    </location>
    <ligand>
        <name>L-aspartate</name>
        <dbReference type="ChEBI" id="CHEBI:29991"/>
    </ligand>
</feature>
<feature type="binding site" evidence="3">
    <location>
        <position position="375"/>
    </location>
    <ligand>
        <name>L-aspartate</name>
        <dbReference type="ChEBI" id="CHEBI:29991"/>
    </ligand>
</feature>
<feature type="site" description="Important for prephenate aminotransferase activity" evidence="3">
    <location>
        <position position="12"/>
    </location>
</feature>
<feature type="modified residue" description="N6-(pyridoxal phosphate)lysine" evidence="3">
    <location>
        <position position="239"/>
    </location>
</feature>
<dbReference type="EC" id="2.6.1.1" evidence="2"/>
<dbReference type="EC" id="2.6.1.79" evidence="2"/>
<dbReference type="EMBL" id="AJ235270">
    <property type="protein sequence ID" value="CAA14561.1"/>
    <property type="status" value="ALT_INIT"/>
    <property type="molecule type" value="Genomic_DNA"/>
</dbReference>
<dbReference type="PIR" id="B71718">
    <property type="entry name" value="B71718"/>
</dbReference>
<dbReference type="RefSeq" id="NP_220484.1">
    <property type="nucleotide sequence ID" value="NC_000963.1"/>
</dbReference>
<dbReference type="RefSeq" id="WP_014411730.1">
    <property type="nucleotide sequence ID" value="NC_000963.1"/>
</dbReference>
<dbReference type="SMR" id="Q9ZE56"/>
<dbReference type="STRING" id="272947.gene:17555174"/>
<dbReference type="EnsemblBacteria" id="CAA14561">
    <property type="protein sequence ID" value="CAA14561"/>
    <property type="gene ID" value="CAA14561"/>
</dbReference>
<dbReference type="KEGG" id="rpr:RP091"/>
<dbReference type="PATRIC" id="fig|272947.5.peg.91"/>
<dbReference type="eggNOG" id="COG0436">
    <property type="taxonomic scope" value="Bacteria"/>
</dbReference>
<dbReference type="HOGENOM" id="CLU_017584_4_3_5"/>
<dbReference type="OrthoDB" id="9804407at2"/>
<dbReference type="Proteomes" id="UP000002480">
    <property type="component" value="Chromosome"/>
</dbReference>
<dbReference type="GO" id="GO:0005737">
    <property type="term" value="C:cytoplasm"/>
    <property type="evidence" value="ECO:0007669"/>
    <property type="project" value="UniProtKB-SubCell"/>
</dbReference>
<dbReference type="GO" id="GO:0033854">
    <property type="term" value="F:glutamate-prephenate aminotransferase activity"/>
    <property type="evidence" value="ECO:0007669"/>
    <property type="project" value="UniProtKB-EC"/>
</dbReference>
<dbReference type="GO" id="GO:0004069">
    <property type="term" value="F:L-aspartate:2-oxoglutarate aminotransferase activity"/>
    <property type="evidence" value="ECO:0007669"/>
    <property type="project" value="UniProtKB-EC"/>
</dbReference>
<dbReference type="GO" id="GO:0030170">
    <property type="term" value="F:pyridoxal phosphate binding"/>
    <property type="evidence" value="ECO:0007669"/>
    <property type="project" value="InterPro"/>
</dbReference>
<dbReference type="GO" id="GO:0006520">
    <property type="term" value="P:amino acid metabolic process"/>
    <property type="evidence" value="ECO:0007669"/>
    <property type="project" value="InterPro"/>
</dbReference>
<dbReference type="GO" id="GO:0009058">
    <property type="term" value="P:biosynthetic process"/>
    <property type="evidence" value="ECO:0007669"/>
    <property type="project" value="InterPro"/>
</dbReference>
<dbReference type="CDD" id="cd00609">
    <property type="entry name" value="AAT_like"/>
    <property type="match status" value="1"/>
</dbReference>
<dbReference type="FunFam" id="3.40.640.10:FF:000033">
    <property type="entry name" value="Aspartate aminotransferase"/>
    <property type="match status" value="1"/>
</dbReference>
<dbReference type="Gene3D" id="3.90.1150.10">
    <property type="entry name" value="Aspartate Aminotransferase, domain 1"/>
    <property type="match status" value="1"/>
</dbReference>
<dbReference type="Gene3D" id="3.40.640.10">
    <property type="entry name" value="Type I PLP-dependent aspartate aminotransferase-like (Major domain)"/>
    <property type="match status" value="1"/>
</dbReference>
<dbReference type="InterPro" id="IPR004839">
    <property type="entry name" value="Aminotransferase_I/II_large"/>
</dbReference>
<dbReference type="InterPro" id="IPR050596">
    <property type="entry name" value="AspAT/PAT-like"/>
</dbReference>
<dbReference type="InterPro" id="IPR004838">
    <property type="entry name" value="NHTrfase_class1_PyrdxlP-BS"/>
</dbReference>
<dbReference type="InterPro" id="IPR015424">
    <property type="entry name" value="PyrdxlP-dep_Trfase"/>
</dbReference>
<dbReference type="InterPro" id="IPR015421">
    <property type="entry name" value="PyrdxlP-dep_Trfase_major"/>
</dbReference>
<dbReference type="InterPro" id="IPR015422">
    <property type="entry name" value="PyrdxlP-dep_Trfase_small"/>
</dbReference>
<dbReference type="PANTHER" id="PTHR46383">
    <property type="entry name" value="ASPARTATE AMINOTRANSFERASE"/>
    <property type="match status" value="1"/>
</dbReference>
<dbReference type="PANTHER" id="PTHR46383:SF1">
    <property type="entry name" value="ASPARTATE AMINOTRANSFERASE"/>
    <property type="match status" value="1"/>
</dbReference>
<dbReference type="Pfam" id="PF00155">
    <property type="entry name" value="Aminotran_1_2"/>
    <property type="match status" value="1"/>
</dbReference>
<dbReference type="PRINTS" id="PR00753">
    <property type="entry name" value="ACCSYNTHASE"/>
</dbReference>
<dbReference type="SUPFAM" id="SSF53383">
    <property type="entry name" value="PLP-dependent transferases"/>
    <property type="match status" value="1"/>
</dbReference>
<dbReference type="PROSITE" id="PS00105">
    <property type="entry name" value="AA_TRANSFER_CLASS_1"/>
    <property type="match status" value="1"/>
</dbReference>